<comment type="similarity">
    <text evidence="1">Belongs to the bacterial ribosomal protein bS16 family.</text>
</comment>
<dbReference type="EMBL" id="BX569693">
    <property type="protein sequence ID" value="CAE08132.1"/>
    <property type="molecule type" value="Genomic_DNA"/>
</dbReference>
<dbReference type="RefSeq" id="WP_011128481.1">
    <property type="nucleotide sequence ID" value="NC_005070.1"/>
</dbReference>
<dbReference type="SMR" id="Q7TTU5"/>
<dbReference type="STRING" id="84588.SYNW1617"/>
<dbReference type="KEGG" id="syw:SYNW1617"/>
<dbReference type="eggNOG" id="COG0228">
    <property type="taxonomic scope" value="Bacteria"/>
</dbReference>
<dbReference type="HOGENOM" id="CLU_100590_3_2_3"/>
<dbReference type="Proteomes" id="UP000001422">
    <property type="component" value="Chromosome"/>
</dbReference>
<dbReference type="GO" id="GO:0005737">
    <property type="term" value="C:cytoplasm"/>
    <property type="evidence" value="ECO:0007669"/>
    <property type="project" value="UniProtKB-ARBA"/>
</dbReference>
<dbReference type="GO" id="GO:0015935">
    <property type="term" value="C:small ribosomal subunit"/>
    <property type="evidence" value="ECO:0007669"/>
    <property type="project" value="TreeGrafter"/>
</dbReference>
<dbReference type="GO" id="GO:0003735">
    <property type="term" value="F:structural constituent of ribosome"/>
    <property type="evidence" value="ECO:0007669"/>
    <property type="project" value="InterPro"/>
</dbReference>
<dbReference type="GO" id="GO:0006412">
    <property type="term" value="P:translation"/>
    <property type="evidence" value="ECO:0007669"/>
    <property type="project" value="UniProtKB-UniRule"/>
</dbReference>
<dbReference type="Gene3D" id="3.30.1320.10">
    <property type="match status" value="1"/>
</dbReference>
<dbReference type="HAMAP" id="MF_00385">
    <property type="entry name" value="Ribosomal_bS16"/>
    <property type="match status" value="1"/>
</dbReference>
<dbReference type="InterPro" id="IPR000307">
    <property type="entry name" value="Ribosomal_bS16"/>
</dbReference>
<dbReference type="InterPro" id="IPR020592">
    <property type="entry name" value="Ribosomal_bS16_CS"/>
</dbReference>
<dbReference type="InterPro" id="IPR023803">
    <property type="entry name" value="Ribosomal_bS16_dom_sf"/>
</dbReference>
<dbReference type="NCBIfam" id="TIGR00002">
    <property type="entry name" value="S16"/>
    <property type="match status" value="1"/>
</dbReference>
<dbReference type="PANTHER" id="PTHR12919">
    <property type="entry name" value="30S RIBOSOMAL PROTEIN S16"/>
    <property type="match status" value="1"/>
</dbReference>
<dbReference type="PANTHER" id="PTHR12919:SF20">
    <property type="entry name" value="SMALL RIBOSOMAL SUBUNIT PROTEIN BS16M"/>
    <property type="match status" value="1"/>
</dbReference>
<dbReference type="Pfam" id="PF00886">
    <property type="entry name" value="Ribosomal_S16"/>
    <property type="match status" value="1"/>
</dbReference>
<dbReference type="SUPFAM" id="SSF54565">
    <property type="entry name" value="Ribosomal protein S16"/>
    <property type="match status" value="1"/>
</dbReference>
<dbReference type="PROSITE" id="PS00732">
    <property type="entry name" value="RIBOSOMAL_S16"/>
    <property type="match status" value="1"/>
</dbReference>
<proteinExistence type="inferred from homology"/>
<evidence type="ECO:0000255" key="1">
    <source>
        <dbReference type="HAMAP-Rule" id="MF_00385"/>
    </source>
</evidence>
<evidence type="ECO:0000256" key="2">
    <source>
        <dbReference type="SAM" id="MobiDB-lite"/>
    </source>
</evidence>
<evidence type="ECO:0000305" key="3"/>
<accession>Q7TTU5</accession>
<feature type="chain" id="PRO_0000167264" description="Small ribosomal subunit protein bS16">
    <location>
        <begin position="1"/>
        <end position="140"/>
    </location>
</feature>
<feature type="region of interest" description="Disordered" evidence="2">
    <location>
        <begin position="86"/>
        <end position="140"/>
    </location>
</feature>
<feature type="compositionally biased region" description="Basic and acidic residues" evidence="2">
    <location>
        <begin position="94"/>
        <end position="114"/>
    </location>
</feature>
<feature type="compositionally biased region" description="Low complexity" evidence="2">
    <location>
        <begin position="115"/>
        <end position="124"/>
    </location>
</feature>
<feature type="compositionally biased region" description="Acidic residues" evidence="2">
    <location>
        <begin position="130"/>
        <end position="140"/>
    </location>
</feature>
<gene>
    <name evidence="1" type="primary">rpsP</name>
    <name evidence="1" type="synonym">rps16</name>
    <name type="ordered locus">SYNW1617</name>
</gene>
<keyword id="KW-0687">Ribonucleoprotein</keyword>
<keyword id="KW-0689">Ribosomal protein</keyword>
<reference key="1">
    <citation type="journal article" date="2003" name="Nature">
        <title>The genome of a motile marine Synechococcus.</title>
        <authorList>
            <person name="Palenik B."/>
            <person name="Brahamsha B."/>
            <person name="Larimer F.W."/>
            <person name="Land M.L."/>
            <person name="Hauser L."/>
            <person name="Chain P."/>
            <person name="Lamerdin J.E."/>
            <person name="Regala W."/>
            <person name="Allen E.E."/>
            <person name="McCarren J."/>
            <person name="Paulsen I.T."/>
            <person name="Dufresne A."/>
            <person name="Partensky F."/>
            <person name="Webb E.A."/>
            <person name="Waterbury J."/>
        </authorList>
    </citation>
    <scope>NUCLEOTIDE SEQUENCE [LARGE SCALE GENOMIC DNA]</scope>
    <source>
        <strain>WH8102</strain>
    </source>
</reference>
<organism>
    <name type="scientific">Parasynechococcus marenigrum (strain WH8102)</name>
    <dbReference type="NCBI Taxonomy" id="84588"/>
    <lineage>
        <taxon>Bacteria</taxon>
        <taxon>Bacillati</taxon>
        <taxon>Cyanobacteriota</taxon>
        <taxon>Cyanophyceae</taxon>
        <taxon>Synechococcales</taxon>
        <taxon>Prochlorococcaceae</taxon>
        <taxon>Parasynechococcus</taxon>
        <taxon>Parasynechococcus marenigrum</taxon>
    </lineage>
</organism>
<protein>
    <recommendedName>
        <fullName evidence="1">Small ribosomal subunit protein bS16</fullName>
    </recommendedName>
    <alternativeName>
        <fullName evidence="3">30S ribosomal protein S16</fullName>
    </alternativeName>
</protein>
<name>RS16_PARMW</name>
<sequence length="140" mass="15194">MIKLRLKRFGKKREASFRLVACNSTSRRDGRPLQELGFYNPRTKETRLDTEAIRERLGQGAQPTDVVRTLLERGGLIEKTIRPAETVGKAKQAAKREEEAKQAAKEAAEAKAAAEAEAAAAAEAAKAEDAPDGETESSEG</sequence>